<gene>
    <name evidence="1" type="primary">dapD</name>
    <name type="ordered locus">H16_A2066</name>
</gene>
<organism>
    <name type="scientific">Cupriavidus necator (strain ATCC 17699 / DSM 428 / KCTC 22496 / NCIMB 10442 / H16 / Stanier 337)</name>
    <name type="common">Ralstonia eutropha</name>
    <dbReference type="NCBI Taxonomy" id="381666"/>
    <lineage>
        <taxon>Bacteria</taxon>
        <taxon>Pseudomonadati</taxon>
        <taxon>Pseudomonadota</taxon>
        <taxon>Betaproteobacteria</taxon>
        <taxon>Burkholderiales</taxon>
        <taxon>Burkholderiaceae</taxon>
        <taxon>Cupriavidus</taxon>
    </lineage>
</organism>
<evidence type="ECO:0000255" key="1">
    <source>
        <dbReference type="HAMAP-Rule" id="MF_00811"/>
    </source>
</evidence>
<accession>Q0KA05</accession>
<proteinExistence type="inferred from homology"/>
<name>DAPD_CUPNH</name>
<dbReference type="EC" id="2.3.1.117" evidence="1"/>
<dbReference type="EMBL" id="AM260479">
    <property type="protein sequence ID" value="CAJ93166.1"/>
    <property type="molecule type" value="Genomic_DNA"/>
</dbReference>
<dbReference type="RefSeq" id="WP_010814179.1">
    <property type="nucleotide sequence ID" value="NZ_CP039287.1"/>
</dbReference>
<dbReference type="SMR" id="Q0KA05"/>
<dbReference type="STRING" id="381666.H16_A2066"/>
<dbReference type="KEGG" id="reh:H16_A2066"/>
<dbReference type="eggNOG" id="COG2171">
    <property type="taxonomic scope" value="Bacteria"/>
</dbReference>
<dbReference type="HOGENOM" id="CLU_050859_0_1_4"/>
<dbReference type="OrthoDB" id="9775362at2"/>
<dbReference type="UniPathway" id="UPA00034">
    <property type="reaction ID" value="UER00019"/>
</dbReference>
<dbReference type="Proteomes" id="UP000008210">
    <property type="component" value="Chromosome 1"/>
</dbReference>
<dbReference type="GO" id="GO:0005737">
    <property type="term" value="C:cytoplasm"/>
    <property type="evidence" value="ECO:0007669"/>
    <property type="project" value="UniProtKB-SubCell"/>
</dbReference>
<dbReference type="GO" id="GO:0008666">
    <property type="term" value="F:2,3,4,5-tetrahydropyridine-2,6-dicarboxylate N-succinyltransferase activity"/>
    <property type="evidence" value="ECO:0007669"/>
    <property type="project" value="UniProtKB-UniRule"/>
</dbReference>
<dbReference type="GO" id="GO:0016779">
    <property type="term" value="F:nucleotidyltransferase activity"/>
    <property type="evidence" value="ECO:0007669"/>
    <property type="project" value="TreeGrafter"/>
</dbReference>
<dbReference type="GO" id="GO:0019877">
    <property type="term" value="P:diaminopimelate biosynthetic process"/>
    <property type="evidence" value="ECO:0007669"/>
    <property type="project" value="UniProtKB-UniRule"/>
</dbReference>
<dbReference type="GO" id="GO:0009089">
    <property type="term" value="P:lysine biosynthetic process via diaminopimelate"/>
    <property type="evidence" value="ECO:0007669"/>
    <property type="project" value="UniProtKB-UniRule"/>
</dbReference>
<dbReference type="CDD" id="cd03350">
    <property type="entry name" value="LbH_THP_succinylT"/>
    <property type="match status" value="1"/>
</dbReference>
<dbReference type="Gene3D" id="2.160.10.10">
    <property type="entry name" value="Hexapeptide repeat proteins"/>
    <property type="match status" value="1"/>
</dbReference>
<dbReference type="Gene3D" id="1.10.166.10">
    <property type="entry name" value="Tetrahydrodipicolinate-N-succinyltransferase, N-terminal domain"/>
    <property type="match status" value="1"/>
</dbReference>
<dbReference type="HAMAP" id="MF_00811">
    <property type="entry name" value="DapD"/>
    <property type="match status" value="1"/>
</dbReference>
<dbReference type="InterPro" id="IPR005664">
    <property type="entry name" value="DapD_Trfase_Hexpep_rpt_fam"/>
</dbReference>
<dbReference type="InterPro" id="IPR001451">
    <property type="entry name" value="Hexapep"/>
</dbReference>
<dbReference type="InterPro" id="IPR018357">
    <property type="entry name" value="Hexapep_transf_CS"/>
</dbReference>
<dbReference type="InterPro" id="IPR023180">
    <property type="entry name" value="THP_succinylTrfase_dom1"/>
</dbReference>
<dbReference type="InterPro" id="IPR037133">
    <property type="entry name" value="THP_succinylTrfase_N_sf"/>
</dbReference>
<dbReference type="InterPro" id="IPR011004">
    <property type="entry name" value="Trimer_LpxA-like_sf"/>
</dbReference>
<dbReference type="NCBIfam" id="TIGR00965">
    <property type="entry name" value="dapD"/>
    <property type="match status" value="1"/>
</dbReference>
<dbReference type="NCBIfam" id="NF008808">
    <property type="entry name" value="PRK11830.1"/>
    <property type="match status" value="1"/>
</dbReference>
<dbReference type="PANTHER" id="PTHR19136:SF52">
    <property type="entry name" value="2,3,4,5-TETRAHYDROPYRIDINE-2,6-DICARBOXYLATE N-SUCCINYLTRANSFERASE"/>
    <property type="match status" value="1"/>
</dbReference>
<dbReference type="PANTHER" id="PTHR19136">
    <property type="entry name" value="MOLYBDENUM COFACTOR GUANYLYLTRANSFERASE"/>
    <property type="match status" value="1"/>
</dbReference>
<dbReference type="Pfam" id="PF14602">
    <property type="entry name" value="Hexapep_2"/>
    <property type="match status" value="1"/>
</dbReference>
<dbReference type="Pfam" id="PF14805">
    <property type="entry name" value="THDPS_N_2"/>
    <property type="match status" value="1"/>
</dbReference>
<dbReference type="SUPFAM" id="SSF51161">
    <property type="entry name" value="Trimeric LpxA-like enzymes"/>
    <property type="match status" value="1"/>
</dbReference>
<dbReference type="PROSITE" id="PS00101">
    <property type="entry name" value="HEXAPEP_TRANSFERASES"/>
    <property type="match status" value="1"/>
</dbReference>
<keyword id="KW-0012">Acyltransferase</keyword>
<keyword id="KW-0028">Amino-acid biosynthesis</keyword>
<keyword id="KW-0963">Cytoplasm</keyword>
<keyword id="KW-0220">Diaminopimelate biosynthesis</keyword>
<keyword id="KW-0457">Lysine biosynthesis</keyword>
<keyword id="KW-1185">Reference proteome</keyword>
<keyword id="KW-0677">Repeat</keyword>
<keyword id="KW-0808">Transferase</keyword>
<reference key="1">
    <citation type="journal article" date="2006" name="Nat. Biotechnol.">
        <title>Genome sequence of the bioplastic-producing 'Knallgas' bacterium Ralstonia eutropha H16.</title>
        <authorList>
            <person name="Pohlmann A."/>
            <person name="Fricke W.F."/>
            <person name="Reinecke F."/>
            <person name="Kusian B."/>
            <person name="Liesegang H."/>
            <person name="Cramm R."/>
            <person name="Eitinger T."/>
            <person name="Ewering C."/>
            <person name="Poetter M."/>
            <person name="Schwartz E."/>
            <person name="Strittmatter A."/>
            <person name="Voss I."/>
            <person name="Gottschalk G."/>
            <person name="Steinbuechel A."/>
            <person name="Friedrich B."/>
            <person name="Bowien B."/>
        </authorList>
    </citation>
    <scope>NUCLEOTIDE SEQUENCE [LARGE SCALE GENOMIC DNA]</scope>
    <source>
        <strain>ATCC 17699 / DSM 428 / KCTC 22496 / NCIMB 10442 / H16 / Stanier 337</strain>
    </source>
</reference>
<comment type="catalytic activity">
    <reaction evidence="1">
        <text>(S)-2,3,4,5-tetrahydrodipicolinate + succinyl-CoA + H2O = (S)-2-succinylamino-6-oxoheptanedioate + CoA</text>
        <dbReference type="Rhea" id="RHEA:17325"/>
        <dbReference type="ChEBI" id="CHEBI:15377"/>
        <dbReference type="ChEBI" id="CHEBI:15685"/>
        <dbReference type="ChEBI" id="CHEBI:16845"/>
        <dbReference type="ChEBI" id="CHEBI:57287"/>
        <dbReference type="ChEBI" id="CHEBI:57292"/>
        <dbReference type="EC" id="2.3.1.117"/>
    </reaction>
</comment>
<comment type="pathway">
    <text evidence="1">Amino-acid biosynthesis; L-lysine biosynthesis via DAP pathway; LL-2,6-diaminopimelate from (S)-tetrahydrodipicolinate (succinylase route): step 1/3.</text>
</comment>
<comment type="subunit">
    <text evidence="1">Homotrimer.</text>
</comment>
<comment type="subcellular location">
    <subcellularLocation>
        <location evidence="1">Cytoplasm</location>
    </subcellularLocation>
</comment>
<comment type="similarity">
    <text evidence="1">Belongs to the transferase hexapeptide repeat family.</text>
</comment>
<sequence>MTQALQALIDQAWEDRTSLSPKSAPNDIREAVANVISQLDSGALRVAEKQGKDWIVNQWIKKAVLLSFRLEDNAPMSAGGFAQFYDKVPTKFANWSADDFAKAGFRVVPPAVARRGSFIAKNAVLMPSYVNIGAYVDEGTMVDTWATVGSCAQIGKNVHLSGGVGIGGVLEPLQANPVIIEDNCFIGARSEVVEGVIVEENSVISMGVYLGQSTKIYDRETGEIHYGRVPAGSVVVAGNLPSKDGKYSLYCAVIVKKVDAQTRAKTSLNDLLRGD</sequence>
<feature type="chain" id="PRO_1000047164" description="2,3,4,5-tetrahydropyridine-2,6-dicarboxylate N-succinyltransferase">
    <location>
        <begin position="1"/>
        <end position="275"/>
    </location>
</feature>
<feature type="binding site" evidence="1">
    <location>
        <position position="106"/>
    </location>
    <ligand>
        <name>substrate</name>
    </ligand>
</feature>
<feature type="binding site" evidence="1">
    <location>
        <position position="143"/>
    </location>
    <ligand>
        <name>substrate</name>
    </ligand>
</feature>
<protein>
    <recommendedName>
        <fullName evidence="1">2,3,4,5-tetrahydropyridine-2,6-dicarboxylate N-succinyltransferase</fullName>
        <ecNumber evidence="1">2.3.1.117</ecNumber>
    </recommendedName>
    <alternativeName>
        <fullName evidence="1">Tetrahydrodipicolinate N-succinyltransferase</fullName>
        <shortName evidence="1">THDP succinyltransferase</shortName>
        <shortName evidence="1">THP succinyltransferase</shortName>
        <shortName evidence="1">Tetrahydropicolinate succinylase</shortName>
    </alternativeName>
</protein>